<evidence type="ECO:0000255" key="1"/>
<evidence type="ECO:0000269" key="2">
    <source>
    </source>
</evidence>
<evidence type="ECO:0000269" key="3">
    <source>
    </source>
</evidence>
<evidence type="ECO:0000305" key="4"/>
<evidence type="ECO:0007829" key="5">
    <source>
        <dbReference type="PDB" id="7BVF"/>
    </source>
</evidence>
<feature type="chain" id="PRO_0000220564" description="Probable arabinosyltransferase A">
    <location>
        <begin position="1"/>
        <end position="1094"/>
    </location>
</feature>
<feature type="transmembrane region" description="Helical" evidence="1">
    <location>
        <begin position="12"/>
        <end position="34"/>
    </location>
</feature>
<feature type="transmembrane region" description="Helical" evidence="1">
    <location>
        <begin position="205"/>
        <end position="224"/>
    </location>
</feature>
<feature type="transmembrane region" description="Helical" evidence="1">
    <location>
        <begin position="247"/>
        <end position="269"/>
    </location>
</feature>
<feature type="transmembrane region" description="Helical" evidence="1">
    <location>
        <begin position="322"/>
        <end position="344"/>
    </location>
</feature>
<feature type="transmembrane region" description="Helical" evidence="1">
    <location>
        <begin position="356"/>
        <end position="375"/>
    </location>
</feature>
<feature type="transmembrane region" description="Helical" evidence="1">
    <location>
        <begin position="408"/>
        <end position="430"/>
    </location>
</feature>
<feature type="transmembrane region" description="Helical" evidence="1">
    <location>
        <begin position="451"/>
        <end position="470"/>
    </location>
</feature>
<feature type="transmembrane region" description="Helical" evidence="1">
    <location>
        <begin position="519"/>
        <end position="536"/>
    </location>
</feature>
<feature type="transmembrane region" description="Helical" evidence="1">
    <location>
        <begin position="543"/>
        <end position="565"/>
    </location>
</feature>
<feature type="transmembrane region" description="Helical" evidence="1">
    <location>
        <begin position="575"/>
        <end position="597"/>
    </location>
</feature>
<feature type="transmembrane region" description="Helical" evidence="1">
    <location>
        <begin position="604"/>
        <end position="626"/>
    </location>
</feature>
<feature type="transmembrane region" description="Helical" evidence="1">
    <location>
        <begin position="641"/>
        <end position="663"/>
    </location>
</feature>
<feature type="transmembrane region" description="Helical" evidence="1">
    <location>
        <begin position="684"/>
        <end position="706"/>
    </location>
</feature>
<feature type="sequence variant" description="Resistance to EMB." evidence="2">
    <original>A</original>
    <variation>T</variation>
    <location>
        <position position="201"/>
    </location>
</feature>
<feature type="sequence variant" description="Resistance to EMB." evidence="2">
    <original>G</original>
    <variation>S</variation>
    <location>
        <position position="321"/>
    </location>
</feature>
<feature type="sequence variant" description="Resistance to EMB." evidence="2">
    <original>G</original>
    <variation>D</variation>
    <location>
        <position position="350"/>
    </location>
</feature>
<feature type="sequence variant" description="Resistance to EMB." evidence="2">
    <original>A</original>
    <variation>V</variation>
    <location>
        <position position="462"/>
    </location>
</feature>
<feature type="sequence variant" description="Resistance to EMB." evidence="2">
    <original>D</original>
    <variation>A</variation>
    <location>
        <position position="833"/>
    </location>
</feature>
<feature type="sequence variant" description="Resistance to EMB." evidence="2">
    <original>P</original>
    <variation>S</variation>
    <location>
        <position position="913"/>
    </location>
</feature>
<feature type="sequence conflict" description="In Ref. 1; AAC45280." evidence="4" ref="1">
    <location>
        <position position="116"/>
    </location>
</feature>
<feature type="sequence conflict" description="In Ref. 1; AAC45280." evidence="4" ref="1">
    <original>TG</original>
    <variation>HR</variation>
    <location>
        <begin position="899"/>
        <end position="900"/>
    </location>
</feature>
<feature type="helix" evidence="5">
    <location>
        <begin position="11"/>
        <end position="27"/>
    </location>
</feature>
<feature type="helix" evidence="5">
    <location>
        <begin position="31"/>
        <end position="33"/>
    </location>
</feature>
<feature type="strand" evidence="5">
    <location>
        <begin position="36"/>
        <end position="38"/>
    </location>
</feature>
<feature type="strand" evidence="5">
    <location>
        <begin position="42"/>
        <end position="45"/>
    </location>
</feature>
<feature type="strand" evidence="5">
    <location>
        <begin position="51"/>
        <end position="53"/>
    </location>
</feature>
<feature type="strand" evidence="5">
    <location>
        <begin position="62"/>
        <end position="66"/>
    </location>
</feature>
<feature type="strand" evidence="5">
    <location>
        <begin position="68"/>
        <end position="75"/>
    </location>
</feature>
<feature type="helix" evidence="5">
    <location>
        <begin position="76"/>
        <end position="79"/>
    </location>
</feature>
<feature type="strand" evidence="5">
    <location>
        <begin position="89"/>
        <end position="93"/>
    </location>
</feature>
<feature type="strand" evidence="5">
    <location>
        <begin position="97"/>
        <end position="99"/>
    </location>
</feature>
<feature type="turn" evidence="5">
    <location>
        <begin position="101"/>
        <end position="103"/>
    </location>
</feature>
<feature type="strand" evidence="5">
    <location>
        <begin position="106"/>
        <end position="109"/>
    </location>
</feature>
<feature type="strand" evidence="5">
    <location>
        <begin position="111"/>
        <end position="116"/>
    </location>
</feature>
<feature type="strand" evidence="5">
    <location>
        <begin position="118"/>
        <end position="120"/>
    </location>
</feature>
<feature type="strand" evidence="5">
    <location>
        <begin position="126"/>
        <end position="128"/>
    </location>
</feature>
<feature type="helix" evidence="5">
    <location>
        <begin position="131"/>
        <end position="133"/>
    </location>
</feature>
<feature type="strand" evidence="5">
    <location>
        <begin position="138"/>
        <end position="142"/>
    </location>
</feature>
<feature type="strand" evidence="5">
    <location>
        <begin position="148"/>
        <end position="152"/>
    </location>
</feature>
<feature type="helix" evidence="5">
    <location>
        <begin position="156"/>
        <end position="158"/>
    </location>
</feature>
<feature type="strand" evidence="5">
    <location>
        <begin position="160"/>
        <end position="162"/>
    </location>
</feature>
<feature type="strand" evidence="5">
    <location>
        <begin position="171"/>
        <end position="173"/>
    </location>
</feature>
<feature type="strand" evidence="5">
    <location>
        <begin position="186"/>
        <end position="190"/>
    </location>
</feature>
<feature type="helix" evidence="5">
    <location>
        <begin position="206"/>
        <end position="228"/>
    </location>
</feature>
<feature type="strand" evidence="5">
    <location>
        <begin position="233"/>
        <end position="235"/>
    </location>
</feature>
<feature type="turn" evidence="5">
    <location>
        <begin position="248"/>
        <end position="250"/>
    </location>
</feature>
<feature type="helix" evidence="5">
    <location>
        <begin position="251"/>
        <end position="263"/>
    </location>
</feature>
<feature type="turn" evidence="5">
    <location>
        <begin position="264"/>
        <end position="266"/>
    </location>
</feature>
<feature type="helix" evidence="5">
    <location>
        <begin position="275"/>
        <end position="287"/>
    </location>
</feature>
<feature type="strand" evidence="5">
    <location>
        <begin position="293"/>
        <end position="295"/>
    </location>
</feature>
<feature type="helix" evidence="5">
    <location>
        <begin position="296"/>
        <end position="298"/>
    </location>
</feature>
<feature type="helix" evidence="5">
    <location>
        <begin position="308"/>
        <end position="317"/>
    </location>
</feature>
<feature type="helix" evidence="5">
    <location>
        <begin position="321"/>
        <end position="324"/>
    </location>
</feature>
<feature type="helix" evidence="5">
    <location>
        <begin position="327"/>
        <end position="346"/>
    </location>
</feature>
<feature type="strand" evidence="5">
    <location>
        <begin position="350"/>
        <end position="356"/>
    </location>
</feature>
<feature type="helix" evidence="5">
    <location>
        <begin position="359"/>
        <end position="372"/>
    </location>
</feature>
<feature type="turn" evidence="5">
    <location>
        <begin position="373"/>
        <end position="375"/>
    </location>
</feature>
<feature type="strand" evidence="5">
    <location>
        <begin position="378"/>
        <end position="381"/>
    </location>
</feature>
<feature type="helix" evidence="5">
    <location>
        <begin position="382"/>
        <end position="402"/>
    </location>
</feature>
<feature type="helix" evidence="5">
    <location>
        <begin position="406"/>
        <end position="418"/>
    </location>
</feature>
<feature type="helix" evidence="5">
    <location>
        <begin position="423"/>
        <end position="429"/>
    </location>
</feature>
<feature type="helix" evidence="5">
    <location>
        <begin position="430"/>
        <end position="434"/>
    </location>
</feature>
<feature type="helix" evidence="5">
    <location>
        <begin position="437"/>
        <end position="445"/>
    </location>
</feature>
<feature type="strand" evidence="5">
    <location>
        <begin position="448"/>
        <end position="450"/>
    </location>
</feature>
<feature type="helix" evidence="5">
    <location>
        <begin position="454"/>
        <end position="461"/>
    </location>
</feature>
<feature type="helix" evidence="5">
    <location>
        <begin position="463"/>
        <end position="465"/>
    </location>
</feature>
<feature type="helix" evidence="5">
    <location>
        <begin position="467"/>
        <end position="470"/>
    </location>
</feature>
<feature type="strand" evidence="5">
    <location>
        <begin position="471"/>
        <end position="474"/>
    </location>
</feature>
<feature type="helix" evidence="5">
    <location>
        <begin position="476"/>
        <end position="488"/>
    </location>
</feature>
<feature type="helix" evidence="5">
    <location>
        <begin position="495"/>
        <end position="497"/>
    </location>
</feature>
<feature type="turn" evidence="5">
    <location>
        <begin position="498"/>
        <end position="501"/>
    </location>
</feature>
<feature type="turn" evidence="5">
    <location>
        <begin position="503"/>
        <end position="505"/>
    </location>
</feature>
<feature type="helix" evidence="5">
    <location>
        <begin position="511"/>
        <end position="513"/>
    </location>
</feature>
<feature type="turn" evidence="5">
    <location>
        <begin position="515"/>
        <end position="517"/>
    </location>
</feature>
<feature type="helix" evidence="5">
    <location>
        <begin position="518"/>
        <end position="536"/>
    </location>
</feature>
<feature type="strand" evidence="5">
    <location>
        <begin position="537"/>
        <end position="539"/>
    </location>
</feature>
<feature type="strand" evidence="5">
    <location>
        <begin position="542"/>
        <end position="544"/>
    </location>
</feature>
<feature type="helix" evidence="5">
    <location>
        <begin position="546"/>
        <end position="562"/>
    </location>
</feature>
<feature type="helix" evidence="5">
    <location>
        <begin position="563"/>
        <end position="565"/>
    </location>
</feature>
<feature type="helix" evidence="5">
    <location>
        <begin position="572"/>
        <end position="577"/>
    </location>
</feature>
<feature type="helix" evidence="5">
    <location>
        <begin position="578"/>
        <end position="594"/>
    </location>
</feature>
<feature type="helix" evidence="5">
    <location>
        <begin position="601"/>
        <end position="617"/>
    </location>
</feature>
<feature type="strand" evidence="5">
    <location>
        <begin position="625"/>
        <end position="627"/>
    </location>
</feature>
<feature type="strand" evidence="5">
    <location>
        <begin position="635"/>
        <end position="637"/>
    </location>
</feature>
<feature type="strand" evidence="5">
    <location>
        <begin position="640"/>
        <end position="645"/>
    </location>
</feature>
<feature type="helix" evidence="5">
    <location>
        <begin position="646"/>
        <end position="667"/>
    </location>
</feature>
<feature type="helix" evidence="5">
    <location>
        <begin position="683"/>
        <end position="685"/>
    </location>
</feature>
<feature type="helix" evidence="5">
    <location>
        <begin position="690"/>
        <end position="711"/>
    </location>
</feature>
<feature type="helix" evidence="5">
    <location>
        <begin position="718"/>
        <end position="726"/>
    </location>
</feature>
<feature type="strand" evidence="5">
    <location>
        <begin position="734"/>
        <end position="743"/>
    </location>
</feature>
<feature type="turn" evidence="5">
    <location>
        <begin position="763"/>
        <end position="765"/>
    </location>
</feature>
<feature type="strand" evidence="5">
    <location>
        <begin position="799"/>
        <end position="801"/>
    </location>
</feature>
<feature type="strand" evidence="5">
    <location>
        <begin position="821"/>
        <end position="823"/>
    </location>
</feature>
<feature type="helix" evidence="5">
    <location>
        <begin position="834"/>
        <end position="836"/>
    </location>
</feature>
<feature type="strand" evidence="5">
    <location>
        <begin position="850"/>
        <end position="853"/>
    </location>
</feature>
<feature type="strand" evidence="5">
    <location>
        <begin position="868"/>
        <end position="873"/>
    </location>
</feature>
<feature type="strand" evidence="5">
    <location>
        <begin position="882"/>
        <end position="884"/>
    </location>
</feature>
<feature type="strand" evidence="5">
    <location>
        <begin position="890"/>
        <end position="892"/>
    </location>
</feature>
<feature type="strand" evidence="5">
    <location>
        <begin position="895"/>
        <end position="899"/>
    </location>
</feature>
<feature type="strand" evidence="5">
    <location>
        <begin position="901"/>
        <end position="903"/>
    </location>
</feature>
<feature type="strand" evidence="5">
    <location>
        <begin position="905"/>
        <end position="908"/>
    </location>
</feature>
<feature type="strand" evidence="5">
    <location>
        <begin position="919"/>
        <end position="921"/>
    </location>
</feature>
<feature type="strand" evidence="5">
    <location>
        <begin position="923"/>
        <end position="928"/>
    </location>
</feature>
<feature type="strand" evidence="5">
    <location>
        <begin position="938"/>
        <end position="940"/>
    </location>
</feature>
<feature type="strand" evidence="5">
    <location>
        <begin position="942"/>
        <end position="945"/>
    </location>
</feature>
<feature type="helix" evidence="5">
    <location>
        <begin position="967"/>
        <end position="970"/>
    </location>
</feature>
<feature type="strand" evidence="5">
    <location>
        <begin position="973"/>
        <end position="979"/>
    </location>
</feature>
<feature type="helix" evidence="5">
    <location>
        <begin position="982"/>
        <end position="984"/>
    </location>
</feature>
<feature type="strand" evidence="5">
    <location>
        <begin position="989"/>
        <end position="992"/>
    </location>
</feature>
<feature type="strand" evidence="5">
    <location>
        <begin position="1004"/>
        <end position="1008"/>
    </location>
</feature>
<feature type="helix" evidence="5">
    <location>
        <begin position="1011"/>
        <end position="1016"/>
    </location>
</feature>
<feature type="helix" evidence="5">
    <location>
        <begin position="1018"/>
        <end position="1021"/>
    </location>
</feature>
<feature type="turn" evidence="5">
    <location>
        <begin position="1024"/>
        <end position="1027"/>
    </location>
</feature>
<feature type="helix" evidence="5">
    <location>
        <begin position="1029"/>
        <end position="1031"/>
    </location>
</feature>
<feature type="turn" evidence="5">
    <location>
        <begin position="1032"/>
        <end position="1035"/>
    </location>
</feature>
<feature type="strand" evidence="5">
    <location>
        <begin position="1036"/>
        <end position="1039"/>
    </location>
</feature>
<feature type="strand" evidence="5">
    <location>
        <begin position="1042"/>
        <end position="1046"/>
    </location>
</feature>
<feature type="strand" evidence="5">
    <location>
        <begin position="1056"/>
        <end position="1064"/>
    </location>
</feature>
<feature type="turn" evidence="5">
    <location>
        <begin position="1066"/>
        <end position="1068"/>
    </location>
</feature>
<feature type="strand" evidence="5">
    <location>
        <begin position="1079"/>
        <end position="1081"/>
    </location>
</feature>
<gene>
    <name type="primary">embA</name>
    <name type="ordered locus">Rv3794</name>
    <name type="ORF">MTCY13D12.28</name>
</gene>
<comment type="function">
    <text>Arabinosyl transferase responsible for the polymerization of arabinose into the arabinan of arabinogalactan.</text>
</comment>
<comment type="subcellular location">
    <subcellularLocation>
        <location evidence="4">Cell membrane</location>
        <topology evidence="4">Multi-pass membrane protein</topology>
    </subcellularLocation>
</comment>
<comment type="induction">
    <text evidence="3">Positively regulated by the transcriptional regulatory protein EmbR.</text>
</comment>
<comment type="miscellaneous">
    <text>This is one of the target of the anti-tuberculosis drug ethambutol [(S,S')-2,2'-(ethylenediimino)di-1-butanol; EMB]. EMB is a first-line drug used to treat tuberculosis. EMB inhibits the transfer of arabinogalactan into the cell wall.</text>
</comment>
<comment type="miscellaneous">
    <text>Was identified as a high-confidence drug target.</text>
</comment>
<comment type="similarity">
    <text evidence="4">Belongs to the emb family.</text>
</comment>
<organism>
    <name type="scientific">Mycobacterium tuberculosis (strain ATCC 25618 / H37Rv)</name>
    <dbReference type="NCBI Taxonomy" id="83332"/>
    <lineage>
        <taxon>Bacteria</taxon>
        <taxon>Bacillati</taxon>
        <taxon>Actinomycetota</taxon>
        <taxon>Actinomycetes</taxon>
        <taxon>Mycobacteriales</taxon>
        <taxon>Mycobacteriaceae</taxon>
        <taxon>Mycobacterium</taxon>
        <taxon>Mycobacterium tuberculosis complex</taxon>
    </lineage>
</organism>
<name>EMBA_MYCTU</name>
<proteinExistence type="evidence at protein level"/>
<sequence length="1094" mass="115724">MPHDGNERSHRIARLAAVVSGIAGLLLCGIVPLLPVNQTTATIFWPQGSTADGNITQITAPLVSGAPRALDISIPCSAIATLPANGGLVLSTLPAGGVDTGKAGLFVRANQDTVVVAFRDSVAAVAARSTIAAGGCSALHIWADTGGAGADFMGIPGGAGTLPPEKKPQVGGIFTDLKVGAQPGLSARVDIDTRFITTPGALKKAVMLLGVLAVLVAMVGLAALDRLSRGRTLRDWLTRYRPRVRVGFASRLADAAVIATLLLWHVIGATSSDDGYLLTVARVAPKAGYVANYYRYFGTTEAPFDWYTSVLAQLAAVSTAGVWMRLPATLAGIACWLIVSRFVLRRLGPGPGGLASNRVAVFTAGAVFLSAWLPFNNGLRPEPLIALGVLVTWVLVERSIALGRLAPAAVAIIVATLTATLAPQGLIALAPLLTGARAIAQRIRRRRATDGLLAPLAVLAAALSLITVVVFRDQTLATVAESARIKYKVGPTIAWYQDFLRYYFLTVESNVEGSMSRRFAVLVLLFCLFGVLFVLLRRGRVAGLASGPAWRLIGTTAVGLLLLTFTPTKWAVQFGAFAGLAGVLGAVTAFTFARIGLHSRRNLTLYVTALLFVLAWATSGINGWFYVGNYGVPWYDIQPVIASHPVTSMFLTLSILTGLLAAWYHFRMDYAGHTEVKDNRRNRILASTPLLVVAVIMVAGEVGSMAKAAVFRYPLYTTAKANLTALSTGLSSCAMADDVLAEPDPNAGMLQPVPGQAFGPDGPLGGISPVGFKPEGVGEDLKSDPVVSKPGLVNSDASPNKPNAAITDSAGTAGGKGPVGINGSHAALPFGLDPARTPVMGSYGENNLAATATSAWYQLPPRSPDRPLVVVSAAGAIWSYKEDGDFIYGQSLKLQWGVTGPDGRIQPLGQVFPIDIGPQPAWRNLRFPLAWAPPEADVARIVAYDPNLSPEQWFAFTPPRVPVLESLQRLIGSATPVLMDIATAANFPCQRPFSEHLGIAELPQYRILPDHKQTAASSNLWQSSSTGGPFLFTQALLRTSTIATYLRGDWYRDWGSVEQYHRLVPADQAPDAVVEEGVITVPGWGRPGPIRALP</sequence>
<dbReference type="EC" id="2.4.2.-"/>
<dbReference type="EMBL" id="U68480">
    <property type="protein sequence ID" value="AAC45280.1"/>
    <property type="molecule type" value="Genomic_DNA"/>
</dbReference>
<dbReference type="EMBL" id="AL123456">
    <property type="protein sequence ID" value="CCP46623.1"/>
    <property type="molecule type" value="Genomic_DNA"/>
</dbReference>
<dbReference type="PIR" id="F70697">
    <property type="entry name" value="F70697"/>
</dbReference>
<dbReference type="RefSeq" id="NP_218311.1">
    <property type="nucleotide sequence ID" value="NC_000962.3"/>
</dbReference>
<dbReference type="RefSeq" id="WP_003899696.1">
    <property type="nucleotide sequence ID" value="NZ_NVQJ01000009.1"/>
</dbReference>
<dbReference type="PDB" id="7BVF">
    <property type="method" value="EM"/>
    <property type="resolution" value="2.97 A"/>
    <property type="chains" value="A=2-1094"/>
</dbReference>
<dbReference type="PDBsum" id="7BVF"/>
<dbReference type="EMDB" id="EMD-30218"/>
<dbReference type="SMR" id="P9WNL9"/>
<dbReference type="FunCoup" id="P9WNL9">
    <property type="interactions" value="13"/>
</dbReference>
<dbReference type="STRING" id="83332.Rv3794"/>
<dbReference type="BindingDB" id="P9WNL9"/>
<dbReference type="ChEMBL" id="CHEMBL1877"/>
<dbReference type="DrugBank" id="DB00330">
    <property type="generic name" value="Ethambutol"/>
</dbReference>
<dbReference type="DrugCentral" id="P9WNL9"/>
<dbReference type="TCDB" id="9.B.364.1.5">
    <property type="family name" value="the putative arabinosyltransferase b (aratb) family"/>
</dbReference>
<dbReference type="PaxDb" id="83332-Rv3794"/>
<dbReference type="GeneID" id="886123"/>
<dbReference type="KEGG" id="mtu:Rv3794"/>
<dbReference type="KEGG" id="mtv:RVBD_3794"/>
<dbReference type="TubercuList" id="Rv3794"/>
<dbReference type="eggNOG" id="COG1807">
    <property type="taxonomic scope" value="Bacteria"/>
</dbReference>
<dbReference type="InParanoid" id="P9WNL9"/>
<dbReference type="OrthoDB" id="3584570at2"/>
<dbReference type="PhylomeDB" id="P9WNL9"/>
<dbReference type="BioCyc" id="MetaCyc:G185E-8090-MONOMER"/>
<dbReference type="PRO" id="PR:P9WNL9"/>
<dbReference type="Proteomes" id="UP000001584">
    <property type="component" value="Chromosome"/>
</dbReference>
<dbReference type="GO" id="GO:0005829">
    <property type="term" value="C:cytosol"/>
    <property type="evidence" value="ECO:0007005"/>
    <property type="project" value="MTBBASE"/>
</dbReference>
<dbReference type="GO" id="GO:0005886">
    <property type="term" value="C:plasma membrane"/>
    <property type="evidence" value="ECO:0007005"/>
    <property type="project" value="MTBBASE"/>
</dbReference>
<dbReference type="GO" id="GO:0052636">
    <property type="term" value="F:arabinosyltransferase activity"/>
    <property type="evidence" value="ECO:0000314"/>
    <property type="project" value="MTBBASE"/>
</dbReference>
<dbReference type="GO" id="GO:0071766">
    <property type="term" value="P:Actinobacterium-type cell wall biogenesis"/>
    <property type="evidence" value="ECO:0000315"/>
    <property type="project" value="UniProtKB"/>
</dbReference>
<dbReference type="GO" id="GO:0071555">
    <property type="term" value="P:cell wall organization"/>
    <property type="evidence" value="ECO:0007669"/>
    <property type="project" value="UniProtKB-KW"/>
</dbReference>
<dbReference type="GO" id="GO:0046677">
    <property type="term" value="P:response to antibiotic"/>
    <property type="evidence" value="ECO:0007669"/>
    <property type="project" value="UniProtKB-KW"/>
</dbReference>
<dbReference type="FunFam" id="3.40.190.160:FF:000002">
    <property type="entry name" value="Integral membrane indolylacetylinositol arabinosyltransferase embA"/>
    <property type="match status" value="1"/>
</dbReference>
<dbReference type="FunFam" id="2.60.120.940:FF:000001">
    <property type="entry name" value="Membrane indolylacetylinositol arabinosyltransferase embC"/>
    <property type="match status" value="1"/>
</dbReference>
<dbReference type="Gene3D" id="3.40.190.160">
    <property type="match status" value="1"/>
</dbReference>
<dbReference type="Gene3D" id="2.60.120.610">
    <property type="entry name" value="arabinofuranosyltransferase like domain"/>
    <property type="match status" value="1"/>
</dbReference>
<dbReference type="Gene3D" id="2.60.120.940">
    <property type="entry name" value="EmbC, C-terminal domain, subdomain 2"/>
    <property type="match status" value="1"/>
</dbReference>
<dbReference type="InterPro" id="IPR032731">
    <property type="entry name" value="Arabino_trans_C"/>
</dbReference>
<dbReference type="InterPro" id="IPR042486">
    <property type="entry name" value="Arabino_trans_C_2"/>
</dbReference>
<dbReference type="InterPro" id="IPR007680">
    <property type="entry name" value="Arabino_trans_central"/>
</dbReference>
<dbReference type="InterPro" id="IPR040920">
    <property type="entry name" value="Arabino_trans_N"/>
</dbReference>
<dbReference type="InterPro" id="IPR027451">
    <property type="entry name" value="EmbABC_dom1"/>
</dbReference>
<dbReference type="Pfam" id="PF14896">
    <property type="entry name" value="Arabino_trans_C"/>
    <property type="match status" value="1"/>
</dbReference>
<dbReference type="Pfam" id="PF17689">
    <property type="entry name" value="Arabino_trans_N"/>
    <property type="match status" value="1"/>
</dbReference>
<dbReference type="Pfam" id="PF04602">
    <property type="entry name" value="Arabinose_trans"/>
    <property type="match status" value="1"/>
</dbReference>
<keyword id="KW-0002">3D-structure</keyword>
<keyword id="KW-0046">Antibiotic resistance</keyword>
<keyword id="KW-1003">Cell membrane</keyword>
<keyword id="KW-0961">Cell wall biogenesis/degradation</keyword>
<keyword id="KW-0328">Glycosyltransferase</keyword>
<keyword id="KW-0472">Membrane</keyword>
<keyword id="KW-1185">Reference proteome</keyword>
<keyword id="KW-0808">Transferase</keyword>
<keyword id="KW-0812">Transmembrane</keyword>
<keyword id="KW-1133">Transmembrane helix</keyword>
<reference key="1">
    <citation type="journal article" date="1997" name="Nat. Med.">
        <title>The emb operon, a gene cluster of Mycobacterium tuberculosis involved in resistance to ethambutol.</title>
        <authorList>
            <person name="Telenti A."/>
            <person name="Philipp W.J."/>
            <person name="Sreevatsan S."/>
            <person name="Bernasconi C."/>
            <person name="Stockbauer K.E."/>
            <person name="Wieles B."/>
            <person name="Musser J.M."/>
            <person name="Jacobs W.R. Jr."/>
        </authorList>
    </citation>
    <scope>NUCLEOTIDE SEQUENCE [GENOMIC DNA]</scope>
    <source>
        <strain>ATCC 25618 / H37Rv</strain>
    </source>
</reference>
<reference key="2">
    <citation type="journal article" date="1998" name="Nature">
        <title>Deciphering the biology of Mycobacterium tuberculosis from the complete genome sequence.</title>
        <authorList>
            <person name="Cole S.T."/>
            <person name="Brosch R."/>
            <person name="Parkhill J."/>
            <person name="Garnier T."/>
            <person name="Churcher C.M."/>
            <person name="Harris D.E."/>
            <person name="Gordon S.V."/>
            <person name="Eiglmeier K."/>
            <person name="Gas S."/>
            <person name="Barry C.E. III"/>
            <person name="Tekaia F."/>
            <person name="Badcock K."/>
            <person name="Basham D."/>
            <person name="Brown D."/>
            <person name="Chillingworth T."/>
            <person name="Connor R."/>
            <person name="Davies R.M."/>
            <person name="Devlin K."/>
            <person name="Feltwell T."/>
            <person name="Gentles S."/>
            <person name="Hamlin N."/>
            <person name="Holroyd S."/>
            <person name="Hornsby T."/>
            <person name="Jagels K."/>
            <person name="Krogh A."/>
            <person name="McLean J."/>
            <person name="Moule S."/>
            <person name="Murphy L.D."/>
            <person name="Oliver S."/>
            <person name="Osborne J."/>
            <person name="Quail M.A."/>
            <person name="Rajandream M.A."/>
            <person name="Rogers J."/>
            <person name="Rutter S."/>
            <person name="Seeger K."/>
            <person name="Skelton S."/>
            <person name="Squares S."/>
            <person name="Squares R."/>
            <person name="Sulston J.E."/>
            <person name="Taylor K."/>
            <person name="Whitehead S."/>
            <person name="Barrell B.G."/>
        </authorList>
    </citation>
    <scope>NUCLEOTIDE SEQUENCE [LARGE SCALE GENOMIC DNA]</scope>
    <source>
        <strain>ATCC 25618 / H37Rv</strain>
    </source>
</reference>
<reference key="3">
    <citation type="journal article" date="2006" name="J. Bacteriol.">
        <title>Transcriptional control of the mycobacterial embCAB operon by PknH through a regulatory protein, EmbR, in vivo.</title>
        <authorList>
            <person name="Sharma K."/>
            <person name="Gupta M."/>
            <person name="Pathak M."/>
            <person name="Gupta N."/>
            <person name="Koul A."/>
            <person name="Sarangi S."/>
            <person name="Baweja R."/>
            <person name="Singh Y."/>
        </authorList>
    </citation>
    <scope>INDUCTION</scope>
</reference>
<reference key="4">
    <citation type="journal article" date="2008" name="BMC Syst. Biol.">
        <title>targetTB: a target identification pipeline for Mycobacterium tuberculosis through an interactome, reactome and genome-scale structural analysis.</title>
        <authorList>
            <person name="Raman K."/>
            <person name="Yeturu K."/>
            <person name="Chandra N."/>
        </authorList>
    </citation>
    <scope>IDENTIFICATION AS A DRUG TARGET [LARGE SCALE ANALYSIS]</scope>
</reference>
<reference key="5">
    <citation type="journal article" date="2011" name="Mol. Cell. Proteomics">
        <title>Proteogenomic analysis of Mycobacterium tuberculosis by high resolution mass spectrometry.</title>
        <authorList>
            <person name="Kelkar D.S."/>
            <person name="Kumar D."/>
            <person name="Kumar P."/>
            <person name="Balakrishnan L."/>
            <person name="Muthusamy B."/>
            <person name="Yadav A.K."/>
            <person name="Shrivastava P."/>
            <person name="Marimuthu A."/>
            <person name="Anand S."/>
            <person name="Sundaram H."/>
            <person name="Kingsbury R."/>
            <person name="Harsha H.C."/>
            <person name="Nair B."/>
            <person name="Prasad T.S."/>
            <person name="Chauhan D.S."/>
            <person name="Katoch K."/>
            <person name="Katoch V.M."/>
            <person name="Kumar P."/>
            <person name="Chaerkady R."/>
            <person name="Ramachandran S."/>
            <person name="Dash D."/>
            <person name="Pandey A."/>
        </authorList>
    </citation>
    <scope>IDENTIFICATION BY MASS SPECTROMETRY [LARGE SCALE ANALYSIS]</scope>
    <source>
        <strain>ATCC 25618 / H37Rv</strain>
    </source>
</reference>
<reference key="6">
    <citation type="journal article" date="2000" name="Antimicrob. Agents Chemother.">
        <title>Molecular genetic analysis of nucleotide polymorphisms associated with ethambutol resistance in human isolates of Mycobacterium tuberculosis.</title>
        <authorList>
            <person name="Ramaswamy S.V."/>
            <person name="Amin A.G."/>
            <person name="Goeksel S."/>
            <person name="Stager C.E."/>
            <person name="Dou S.-J."/>
            <person name="El Sahly H."/>
            <person name="Moghazeh S.L."/>
            <person name="Kreiswirth B.N."/>
            <person name="Musser J.M."/>
        </authorList>
    </citation>
    <scope>VARIANTS EMB RESISTANT THR-201; SER-321; ASP-350; VAL-462; ALA-833 AND SER-913</scope>
</reference>
<protein>
    <recommendedName>
        <fullName>Probable arabinosyltransferase A</fullName>
        <ecNumber>2.4.2.-</ecNumber>
    </recommendedName>
</protein>
<accession>P9WNL9</accession>
<accession>L0TDK4</accession>
<accession>P0A560</accession>
<accession>P72029</accession>
<accession>P72060</accession>